<keyword id="KW-0378">Hydrolase</keyword>
<keyword id="KW-0408">Iron</keyword>
<keyword id="KW-0479">Metal-binding</keyword>
<keyword id="KW-0648">Protein biosynthesis</keyword>
<reference key="1">
    <citation type="submission" date="2006-06" db="EMBL/GenBank/DDBJ databases">
        <title>Complete sequence of chromosome of Mycobacterium sp. MCS.</title>
        <authorList>
            <consortium name="US DOE Joint Genome Institute"/>
            <person name="Copeland A."/>
            <person name="Lucas S."/>
            <person name="Lapidus A."/>
            <person name="Barry K."/>
            <person name="Detter J.C."/>
            <person name="Glavina del Rio T."/>
            <person name="Hammon N."/>
            <person name="Israni S."/>
            <person name="Dalin E."/>
            <person name="Tice H."/>
            <person name="Pitluck S."/>
            <person name="Martinez M."/>
            <person name="Schmutz J."/>
            <person name="Larimer F."/>
            <person name="Land M."/>
            <person name="Hauser L."/>
            <person name="Kyrpides N."/>
            <person name="Kim E."/>
            <person name="Miller C.D."/>
            <person name="Hughes J.E."/>
            <person name="Anderson A.J."/>
            <person name="Sims R.C."/>
            <person name="Richardson P."/>
        </authorList>
    </citation>
    <scope>NUCLEOTIDE SEQUENCE [LARGE SCALE GENOMIC DNA]</scope>
    <source>
        <strain>MCS</strain>
    </source>
</reference>
<gene>
    <name evidence="1" type="primary">def</name>
    <name type="ordered locus">Mmcs_0569</name>
</gene>
<dbReference type="EC" id="3.5.1.88" evidence="1"/>
<dbReference type="EMBL" id="CP000384">
    <property type="protein sequence ID" value="ABG06690.1"/>
    <property type="molecule type" value="Genomic_DNA"/>
</dbReference>
<dbReference type="SMR" id="Q1BEJ4"/>
<dbReference type="KEGG" id="mmc:Mmcs_0569"/>
<dbReference type="HOGENOM" id="CLU_061901_1_2_11"/>
<dbReference type="BioCyc" id="MSP164756:G1G6O-581-MONOMER"/>
<dbReference type="GO" id="GO:0046872">
    <property type="term" value="F:metal ion binding"/>
    <property type="evidence" value="ECO:0007669"/>
    <property type="project" value="UniProtKB-KW"/>
</dbReference>
<dbReference type="GO" id="GO:0042586">
    <property type="term" value="F:peptide deformylase activity"/>
    <property type="evidence" value="ECO:0007669"/>
    <property type="project" value="UniProtKB-UniRule"/>
</dbReference>
<dbReference type="GO" id="GO:0043686">
    <property type="term" value="P:co-translational protein modification"/>
    <property type="evidence" value="ECO:0007669"/>
    <property type="project" value="TreeGrafter"/>
</dbReference>
<dbReference type="GO" id="GO:0006412">
    <property type="term" value="P:translation"/>
    <property type="evidence" value="ECO:0007669"/>
    <property type="project" value="UniProtKB-UniRule"/>
</dbReference>
<dbReference type="CDD" id="cd00487">
    <property type="entry name" value="Pep_deformylase"/>
    <property type="match status" value="1"/>
</dbReference>
<dbReference type="Gene3D" id="3.90.45.10">
    <property type="entry name" value="Peptide deformylase"/>
    <property type="match status" value="1"/>
</dbReference>
<dbReference type="HAMAP" id="MF_00163">
    <property type="entry name" value="Pep_deformylase"/>
    <property type="match status" value="1"/>
</dbReference>
<dbReference type="InterPro" id="IPR023635">
    <property type="entry name" value="Peptide_deformylase"/>
</dbReference>
<dbReference type="InterPro" id="IPR036821">
    <property type="entry name" value="Peptide_deformylase_sf"/>
</dbReference>
<dbReference type="NCBIfam" id="TIGR00079">
    <property type="entry name" value="pept_deformyl"/>
    <property type="match status" value="1"/>
</dbReference>
<dbReference type="NCBIfam" id="NF001159">
    <property type="entry name" value="PRK00150.1-3"/>
    <property type="match status" value="1"/>
</dbReference>
<dbReference type="NCBIfam" id="NF009483">
    <property type="entry name" value="PRK12846.1-4"/>
    <property type="match status" value="1"/>
</dbReference>
<dbReference type="PANTHER" id="PTHR10458">
    <property type="entry name" value="PEPTIDE DEFORMYLASE"/>
    <property type="match status" value="1"/>
</dbReference>
<dbReference type="PANTHER" id="PTHR10458:SF2">
    <property type="entry name" value="PEPTIDE DEFORMYLASE, MITOCHONDRIAL"/>
    <property type="match status" value="1"/>
</dbReference>
<dbReference type="Pfam" id="PF01327">
    <property type="entry name" value="Pep_deformylase"/>
    <property type="match status" value="1"/>
</dbReference>
<dbReference type="PIRSF" id="PIRSF004749">
    <property type="entry name" value="Pep_def"/>
    <property type="match status" value="1"/>
</dbReference>
<dbReference type="PRINTS" id="PR01576">
    <property type="entry name" value="PDEFORMYLASE"/>
</dbReference>
<dbReference type="SUPFAM" id="SSF56420">
    <property type="entry name" value="Peptide deformylase"/>
    <property type="match status" value="1"/>
</dbReference>
<accession>Q1BEJ4</accession>
<evidence type="ECO:0000255" key="1">
    <source>
        <dbReference type="HAMAP-Rule" id="MF_00163"/>
    </source>
</evidence>
<organism>
    <name type="scientific">Mycobacterium sp. (strain MCS)</name>
    <dbReference type="NCBI Taxonomy" id="164756"/>
    <lineage>
        <taxon>Bacteria</taxon>
        <taxon>Bacillati</taxon>
        <taxon>Actinomycetota</taxon>
        <taxon>Actinomycetes</taxon>
        <taxon>Mycobacteriales</taxon>
        <taxon>Mycobacteriaceae</taxon>
        <taxon>Mycobacterium</taxon>
    </lineage>
</organism>
<sequence>MAVVPIRIVGDPVLRTETTPIPVGDDGSLPAEVADLIRDLYETMDAANGVGLAANQIGVSQRVFVYDCPDSRGRAGRRRGVVINPVLETSDIPETMPDPDDDEEGCLSVPGEQFPTGRADWARVTGLDADGSPITVEGTGLFARMLQHETGHLDGFLYLDRLIGRHARAAKRAVKHNGWGVPGLSWTPGEDPDPFGH</sequence>
<protein>
    <recommendedName>
        <fullName evidence="1">Peptide deformylase</fullName>
        <shortName evidence="1">PDF</shortName>
        <ecNumber evidence="1">3.5.1.88</ecNumber>
    </recommendedName>
    <alternativeName>
        <fullName evidence="1">Polypeptide deformylase</fullName>
    </alternativeName>
</protein>
<name>DEF_MYCSS</name>
<proteinExistence type="inferred from homology"/>
<feature type="chain" id="PRO_0000301062" description="Peptide deformylase">
    <location>
        <begin position="1"/>
        <end position="197"/>
    </location>
</feature>
<feature type="active site" evidence="1">
    <location>
        <position position="149"/>
    </location>
</feature>
<feature type="binding site" evidence="1">
    <location>
        <position position="106"/>
    </location>
    <ligand>
        <name>Fe cation</name>
        <dbReference type="ChEBI" id="CHEBI:24875"/>
    </ligand>
</feature>
<feature type="binding site" evidence="1">
    <location>
        <position position="148"/>
    </location>
    <ligand>
        <name>Fe cation</name>
        <dbReference type="ChEBI" id="CHEBI:24875"/>
    </ligand>
</feature>
<feature type="binding site" evidence="1">
    <location>
        <position position="152"/>
    </location>
    <ligand>
        <name>Fe cation</name>
        <dbReference type="ChEBI" id="CHEBI:24875"/>
    </ligand>
</feature>
<comment type="function">
    <text evidence="1">Removes the formyl group from the N-terminal Met of newly synthesized proteins. Requires at least a dipeptide for an efficient rate of reaction. N-terminal L-methionine is a prerequisite for activity but the enzyme has broad specificity at other positions.</text>
</comment>
<comment type="catalytic activity">
    <reaction evidence="1">
        <text>N-terminal N-formyl-L-methionyl-[peptide] + H2O = N-terminal L-methionyl-[peptide] + formate</text>
        <dbReference type="Rhea" id="RHEA:24420"/>
        <dbReference type="Rhea" id="RHEA-COMP:10639"/>
        <dbReference type="Rhea" id="RHEA-COMP:10640"/>
        <dbReference type="ChEBI" id="CHEBI:15377"/>
        <dbReference type="ChEBI" id="CHEBI:15740"/>
        <dbReference type="ChEBI" id="CHEBI:49298"/>
        <dbReference type="ChEBI" id="CHEBI:64731"/>
        <dbReference type="EC" id="3.5.1.88"/>
    </reaction>
</comment>
<comment type="cofactor">
    <cofactor evidence="1">
        <name>Fe(2+)</name>
        <dbReference type="ChEBI" id="CHEBI:29033"/>
    </cofactor>
    <text evidence="1">Binds 1 Fe(2+) ion.</text>
</comment>
<comment type="similarity">
    <text evidence="1">Belongs to the polypeptide deformylase family.</text>
</comment>